<feature type="chain" id="PRO_1000166667" description="NADH-quinone oxidoreductase subunit B">
    <location>
        <begin position="1"/>
        <end position="184"/>
    </location>
</feature>
<feature type="binding site" evidence="1">
    <location>
        <position position="63"/>
    </location>
    <ligand>
        <name>[4Fe-4S] cluster</name>
        <dbReference type="ChEBI" id="CHEBI:49883"/>
    </ligand>
</feature>
<feature type="binding site" evidence="1">
    <location>
        <position position="64"/>
    </location>
    <ligand>
        <name>[4Fe-4S] cluster</name>
        <dbReference type="ChEBI" id="CHEBI:49883"/>
    </ligand>
</feature>
<feature type="binding site" evidence="1">
    <location>
        <position position="128"/>
    </location>
    <ligand>
        <name>[4Fe-4S] cluster</name>
        <dbReference type="ChEBI" id="CHEBI:49883"/>
    </ligand>
</feature>
<feature type="binding site" evidence="1">
    <location>
        <position position="158"/>
    </location>
    <ligand>
        <name>[4Fe-4S] cluster</name>
        <dbReference type="ChEBI" id="CHEBI:49883"/>
    </ligand>
</feature>
<comment type="function">
    <text evidence="1">NDH-1 shuttles electrons from NADH, via FMN and iron-sulfur (Fe-S) centers, to quinones in the respiratory chain. The immediate electron acceptor for the enzyme in this species is believed to be ubiquinone. Couples the redox reaction to proton translocation (for every two electrons transferred, four hydrogen ions are translocated across the cytoplasmic membrane), and thus conserves the redox energy in a proton gradient.</text>
</comment>
<comment type="catalytic activity">
    <reaction evidence="1">
        <text>a quinone + NADH + 5 H(+)(in) = a quinol + NAD(+) + 4 H(+)(out)</text>
        <dbReference type="Rhea" id="RHEA:57888"/>
        <dbReference type="ChEBI" id="CHEBI:15378"/>
        <dbReference type="ChEBI" id="CHEBI:24646"/>
        <dbReference type="ChEBI" id="CHEBI:57540"/>
        <dbReference type="ChEBI" id="CHEBI:57945"/>
        <dbReference type="ChEBI" id="CHEBI:132124"/>
    </reaction>
</comment>
<comment type="cofactor">
    <cofactor evidence="1">
        <name>[4Fe-4S] cluster</name>
        <dbReference type="ChEBI" id="CHEBI:49883"/>
    </cofactor>
    <text evidence="1">Binds 1 [4Fe-4S] cluster.</text>
</comment>
<comment type="subunit">
    <text evidence="1">NDH-1 is composed of 14 different subunits. Subunits NuoB, C, D, E, F, and G constitute the peripheral sector of the complex.</text>
</comment>
<comment type="subcellular location">
    <subcellularLocation>
        <location evidence="1">Cell inner membrane</location>
        <topology evidence="1">Peripheral membrane protein</topology>
        <orientation evidence="1">Cytoplasmic side</orientation>
    </subcellularLocation>
</comment>
<comment type="similarity">
    <text evidence="1">Belongs to the complex I 20 kDa subunit family.</text>
</comment>
<evidence type="ECO:0000255" key="1">
    <source>
        <dbReference type="HAMAP-Rule" id="MF_01356"/>
    </source>
</evidence>
<protein>
    <recommendedName>
        <fullName evidence="1">NADH-quinone oxidoreductase subunit B</fullName>
        <ecNumber evidence="1">7.1.1.-</ecNumber>
    </recommendedName>
    <alternativeName>
        <fullName evidence="1">NADH dehydrogenase I subunit B</fullName>
    </alternativeName>
    <alternativeName>
        <fullName evidence="1">NDH-1 subunit B</fullName>
    </alternativeName>
</protein>
<organism>
    <name type="scientific">Xylella fastidiosa (strain M12)</name>
    <dbReference type="NCBI Taxonomy" id="405440"/>
    <lineage>
        <taxon>Bacteria</taxon>
        <taxon>Pseudomonadati</taxon>
        <taxon>Pseudomonadota</taxon>
        <taxon>Gammaproteobacteria</taxon>
        <taxon>Lysobacterales</taxon>
        <taxon>Lysobacteraceae</taxon>
        <taxon>Xylella</taxon>
    </lineage>
</organism>
<accession>B0U1W6</accession>
<sequence>MGVIQAIDRLMTNPIPDGQVDDILRPQGESPLLQKGYVTTSVDALLNWARTGSMWPMTFGLACCAVEMMHAGAARLDLDRYGIVFRPSPRQSDVMIVAGTLVNKMAPALRKVYDQMPDPKWVISMGSCANGGGYYHYSYSVVRGCDRIVPVDVYVPGCPPTAEALVYGILQLQKKIWRTQTIAG</sequence>
<reference key="1">
    <citation type="journal article" date="2010" name="J. Bacteriol.">
        <title>Whole genome sequences of two Xylella fastidiosa strains (M12 and M23) causing almond leaf scorch disease in California.</title>
        <authorList>
            <person name="Chen J."/>
            <person name="Xie G."/>
            <person name="Han S."/>
            <person name="Chertkov O."/>
            <person name="Sims D."/>
            <person name="Civerolo E.L."/>
        </authorList>
    </citation>
    <scope>NUCLEOTIDE SEQUENCE [LARGE SCALE GENOMIC DNA]</scope>
    <source>
        <strain>M12</strain>
    </source>
</reference>
<keyword id="KW-0004">4Fe-4S</keyword>
<keyword id="KW-0997">Cell inner membrane</keyword>
<keyword id="KW-1003">Cell membrane</keyword>
<keyword id="KW-0408">Iron</keyword>
<keyword id="KW-0411">Iron-sulfur</keyword>
<keyword id="KW-0472">Membrane</keyword>
<keyword id="KW-0479">Metal-binding</keyword>
<keyword id="KW-0520">NAD</keyword>
<keyword id="KW-0874">Quinone</keyword>
<keyword id="KW-1278">Translocase</keyword>
<keyword id="KW-0813">Transport</keyword>
<keyword id="KW-0830">Ubiquinone</keyword>
<gene>
    <name evidence="1" type="primary">nuoB</name>
    <name type="ordered locus">Xfasm12_0270</name>
</gene>
<dbReference type="EC" id="7.1.1.-" evidence="1"/>
<dbReference type="EMBL" id="CP000941">
    <property type="protein sequence ID" value="ACA11293.1"/>
    <property type="molecule type" value="Genomic_DNA"/>
</dbReference>
<dbReference type="RefSeq" id="WP_004085302.1">
    <property type="nucleotide sequence ID" value="NC_010513.1"/>
</dbReference>
<dbReference type="SMR" id="B0U1W6"/>
<dbReference type="KEGG" id="xfm:Xfasm12_0270"/>
<dbReference type="HOGENOM" id="CLU_055737_7_3_6"/>
<dbReference type="GO" id="GO:0005886">
    <property type="term" value="C:plasma membrane"/>
    <property type="evidence" value="ECO:0007669"/>
    <property type="project" value="UniProtKB-SubCell"/>
</dbReference>
<dbReference type="GO" id="GO:0045271">
    <property type="term" value="C:respiratory chain complex I"/>
    <property type="evidence" value="ECO:0007669"/>
    <property type="project" value="TreeGrafter"/>
</dbReference>
<dbReference type="GO" id="GO:0051539">
    <property type="term" value="F:4 iron, 4 sulfur cluster binding"/>
    <property type="evidence" value="ECO:0007669"/>
    <property type="project" value="UniProtKB-KW"/>
</dbReference>
<dbReference type="GO" id="GO:0005506">
    <property type="term" value="F:iron ion binding"/>
    <property type="evidence" value="ECO:0007669"/>
    <property type="project" value="UniProtKB-UniRule"/>
</dbReference>
<dbReference type="GO" id="GO:0008137">
    <property type="term" value="F:NADH dehydrogenase (ubiquinone) activity"/>
    <property type="evidence" value="ECO:0007669"/>
    <property type="project" value="InterPro"/>
</dbReference>
<dbReference type="GO" id="GO:0050136">
    <property type="term" value="F:NADH:ubiquinone reductase (non-electrogenic) activity"/>
    <property type="evidence" value="ECO:0007669"/>
    <property type="project" value="UniProtKB-UniRule"/>
</dbReference>
<dbReference type="GO" id="GO:0048038">
    <property type="term" value="F:quinone binding"/>
    <property type="evidence" value="ECO:0007669"/>
    <property type="project" value="UniProtKB-KW"/>
</dbReference>
<dbReference type="GO" id="GO:0009060">
    <property type="term" value="P:aerobic respiration"/>
    <property type="evidence" value="ECO:0007669"/>
    <property type="project" value="TreeGrafter"/>
</dbReference>
<dbReference type="GO" id="GO:0015990">
    <property type="term" value="P:electron transport coupled proton transport"/>
    <property type="evidence" value="ECO:0007669"/>
    <property type="project" value="TreeGrafter"/>
</dbReference>
<dbReference type="FunFam" id="3.40.50.12280:FF:000001">
    <property type="entry name" value="NADH-quinone oxidoreductase subunit B 2"/>
    <property type="match status" value="1"/>
</dbReference>
<dbReference type="Gene3D" id="3.40.50.12280">
    <property type="match status" value="1"/>
</dbReference>
<dbReference type="HAMAP" id="MF_01356">
    <property type="entry name" value="NDH1_NuoB"/>
    <property type="match status" value="1"/>
</dbReference>
<dbReference type="InterPro" id="IPR006137">
    <property type="entry name" value="NADH_UbQ_OxRdtase-like_20kDa"/>
</dbReference>
<dbReference type="InterPro" id="IPR006138">
    <property type="entry name" value="NADH_UQ_OxRdtase_20Kd_su"/>
</dbReference>
<dbReference type="NCBIfam" id="TIGR01957">
    <property type="entry name" value="nuoB_fam"/>
    <property type="match status" value="1"/>
</dbReference>
<dbReference type="NCBIfam" id="NF005012">
    <property type="entry name" value="PRK06411.1"/>
    <property type="match status" value="1"/>
</dbReference>
<dbReference type="PANTHER" id="PTHR11995">
    <property type="entry name" value="NADH DEHYDROGENASE"/>
    <property type="match status" value="1"/>
</dbReference>
<dbReference type="PANTHER" id="PTHR11995:SF14">
    <property type="entry name" value="NADH DEHYDROGENASE [UBIQUINONE] IRON-SULFUR PROTEIN 7, MITOCHONDRIAL"/>
    <property type="match status" value="1"/>
</dbReference>
<dbReference type="Pfam" id="PF01058">
    <property type="entry name" value="Oxidored_q6"/>
    <property type="match status" value="1"/>
</dbReference>
<dbReference type="SUPFAM" id="SSF56770">
    <property type="entry name" value="HydA/Nqo6-like"/>
    <property type="match status" value="1"/>
</dbReference>
<dbReference type="PROSITE" id="PS01150">
    <property type="entry name" value="COMPLEX1_20K"/>
    <property type="match status" value="1"/>
</dbReference>
<name>NUOB_XYLFM</name>
<proteinExistence type="inferred from homology"/>